<keyword id="KW-0131">Cell cycle</keyword>
<keyword id="KW-0132">Cell division</keyword>
<keyword id="KW-0195">Cyclin</keyword>
<keyword id="KW-0539">Nucleus</keyword>
<keyword id="KW-1185">Reference proteome</keyword>
<keyword id="KW-0832">Ubl conjugation</keyword>
<accession>P39963</accession>
<dbReference type="EMBL" id="X75757">
    <property type="protein sequence ID" value="CAA53385.1"/>
    <property type="molecule type" value="mRNA"/>
</dbReference>
<dbReference type="PIR" id="S41708">
    <property type="entry name" value="S41708"/>
</dbReference>
<dbReference type="RefSeq" id="NP_990570.2">
    <property type="nucleotide sequence ID" value="NM_205239.2"/>
</dbReference>
<dbReference type="SMR" id="P39963"/>
<dbReference type="BioGRID" id="676429">
    <property type="interactions" value="1"/>
</dbReference>
<dbReference type="FunCoup" id="P39963">
    <property type="interactions" value="156"/>
</dbReference>
<dbReference type="STRING" id="9031.ENSGALP00000059571"/>
<dbReference type="PaxDb" id="9031-ENSGALP00000041819"/>
<dbReference type="GeneID" id="396167"/>
<dbReference type="KEGG" id="gga:396167"/>
<dbReference type="CTD" id="85417"/>
<dbReference type="VEuPathDB" id="HostDB:geneid_396167"/>
<dbReference type="eggNOG" id="KOG0653">
    <property type="taxonomic scope" value="Eukaryota"/>
</dbReference>
<dbReference type="InParanoid" id="P39963"/>
<dbReference type="OrthoDB" id="5590282at2759"/>
<dbReference type="PhylomeDB" id="P39963"/>
<dbReference type="PRO" id="PR:P39963"/>
<dbReference type="Proteomes" id="UP000000539">
    <property type="component" value="Unassembled WGS sequence"/>
</dbReference>
<dbReference type="GO" id="GO:0000307">
    <property type="term" value="C:cyclin-dependent protein kinase holoenzyme complex"/>
    <property type="evidence" value="ECO:0000318"/>
    <property type="project" value="GO_Central"/>
</dbReference>
<dbReference type="GO" id="GO:0005737">
    <property type="term" value="C:cytoplasm"/>
    <property type="evidence" value="ECO:0000318"/>
    <property type="project" value="GO_Central"/>
</dbReference>
<dbReference type="GO" id="GO:0005634">
    <property type="term" value="C:nucleus"/>
    <property type="evidence" value="ECO:0000318"/>
    <property type="project" value="GO_Central"/>
</dbReference>
<dbReference type="GO" id="GO:0016538">
    <property type="term" value="F:cyclin-dependent protein serine/threonine kinase regulator activity"/>
    <property type="evidence" value="ECO:0000318"/>
    <property type="project" value="GO_Central"/>
</dbReference>
<dbReference type="GO" id="GO:0051301">
    <property type="term" value="P:cell division"/>
    <property type="evidence" value="ECO:0007669"/>
    <property type="project" value="UniProtKB-KW"/>
</dbReference>
<dbReference type="GO" id="GO:0000082">
    <property type="term" value="P:G1/S transition of mitotic cell cycle"/>
    <property type="evidence" value="ECO:0000318"/>
    <property type="project" value="GO_Central"/>
</dbReference>
<dbReference type="CDD" id="cd20508">
    <property type="entry name" value="CYCLIN_CCNB3_rpt1"/>
    <property type="match status" value="1"/>
</dbReference>
<dbReference type="CDD" id="cd20510">
    <property type="entry name" value="CYCLIN_CCNB3_rpt2"/>
    <property type="match status" value="1"/>
</dbReference>
<dbReference type="FunFam" id="1.10.472.10:FF:000001">
    <property type="entry name" value="G2/mitotic-specific cyclin"/>
    <property type="match status" value="1"/>
</dbReference>
<dbReference type="Gene3D" id="1.10.472.10">
    <property type="entry name" value="Cyclin-like"/>
    <property type="match status" value="2"/>
</dbReference>
<dbReference type="InterPro" id="IPR039361">
    <property type="entry name" value="Cyclin"/>
</dbReference>
<dbReference type="InterPro" id="IPR013763">
    <property type="entry name" value="Cyclin-like_dom"/>
</dbReference>
<dbReference type="InterPro" id="IPR036915">
    <property type="entry name" value="Cyclin-like_sf"/>
</dbReference>
<dbReference type="InterPro" id="IPR046965">
    <property type="entry name" value="Cyclin_A/B-like"/>
</dbReference>
<dbReference type="InterPro" id="IPR004367">
    <property type="entry name" value="Cyclin_C-dom"/>
</dbReference>
<dbReference type="InterPro" id="IPR006671">
    <property type="entry name" value="Cyclin_N"/>
</dbReference>
<dbReference type="InterPro" id="IPR048258">
    <property type="entry name" value="Cyclins_cyclin-box"/>
</dbReference>
<dbReference type="PANTHER" id="PTHR10177">
    <property type="entry name" value="CYCLINS"/>
    <property type="match status" value="1"/>
</dbReference>
<dbReference type="Pfam" id="PF02984">
    <property type="entry name" value="Cyclin_C"/>
    <property type="match status" value="1"/>
</dbReference>
<dbReference type="Pfam" id="PF00134">
    <property type="entry name" value="Cyclin_N"/>
    <property type="match status" value="1"/>
</dbReference>
<dbReference type="PIRSF" id="PIRSF001771">
    <property type="entry name" value="Cyclin_A_B_D_E"/>
    <property type="match status" value="1"/>
</dbReference>
<dbReference type="SMART" id="SM00385">
    <property type="entry name" value="CYCLIN"/>
    <property type="match status" value="2"/>
</dbReference>
<dbReference type="SMART" id="SM01332">
    <property type="entry name" value="Cyclin_C"/>
    <property type="match status" value="1"/>
</dbReference>
<dbReference type="SUPFAM" id="SSF47954">
    <property type="entry name" value="Cyclin-like"/>
    <property type="match status" value="2"/>
</dbReference>
<dbReference type="PROSITE" id="PS00292">
    <property type="entry name" value="CYCLINS"/>
    <property type="match status" value="1"/>
</dbReference>
<reference key="1">
    <citation type="journal article" date="1994" name="EMBO J.">
        <title>Identification of a novel vertebrate cyclin: cyclin B3 shares properties with both A- and B-type cyclins.</title>
        <authorList>
            <person name="Gallant P."/>
            <person name="Nigg E.A."/>
        </authorList>
    </citation>
    <scope>NUCLEOTIDE SEQUENCE [MRNA]</scope>
</reference>
<evidence type="ECO:0000250" key="1"/>
<evidence type="ECO:0000256" key="2">
    <source>
        <dbReference type="SAM" id="MobiDB-lite"/>
    </source>
</evidence>
<evidence type="ECO:0000305" key="3"/>
<gene>
    <name type="primary">CCNB3</name>
    <name type="synonym">CYCB3</name>
</gene>
<feature type="chain" id="PRO_0000080375" description="G2/mitotic-specific cyclin-B3">
    <location>
        <begin position="1"/>
        <end position="403"/>
    </location>
</feature>
<feature type="region of interest" description="Disordered" evidence="2">
    <location>
        <begin position="1"/>
        <end position="86"/>
    </location>
</feature>
<feature type="region of interest" description="Disordered" evidence="2">
    <location>
        <begin position="102"/>
        <end position="122"/>
    </location>
</feature>
<feature type="short sequence motif" description="D-box">
    <location>
        <begin position="51"/>
        <end position="59"/>
    </location>
</feature>
<feature type="compositionally biased region" description="Polar residues" evidence="2">
    <location>
        <begin position="7"/>
        <end position="25"/>
    </location>
</feature>
<organism>
    <name type="scientific">Gallus gallus</name>
    <name type="common">Chicken</name>
    <dbReference type="NCBI Taxonomy" id="9031"/>
    <lineage>
        <taxon>Eukaryota</taxon>
        <taxon>Metazoa</taxon>
        <taxon>Chordata</taxon>
        <taxon>Craniata</taxon>
        <taxon>Vertebrata</taxon>
        <taxon>Euteleostomi</taxon>
        <taxon>Archelosauria</taxon>
        <taxon>Archosauria</taxon>
        <taxon>Dinosauria</taxon>
        <taxon>Saurischia</taxon>
        <taxon>Theropoda</taxon>
        <taxon>Coelurosauria</taxon>
        <taxon>Aves</taxon>
        <taxon>Neognathae</taxon>
        <taxon>Galloanserae</taxon>
        <taxon>Galliformes</taxon>
        <taxon>Phasianidae</taxon>
        <taxon>Phasianinae</taxon>
        <taxon>Gallus</taxon>
    </lineage>
</organism>
<name>CCNB3_CHICK</name>
<sequence length="403" mass="45952">MPVARSSKAQSSKQPRASKAPSVTENVPPEKEEGCQAKRSPSSPQGGPKKRSAFGDITNAHKNQVVTGKKEGVKAPTRKATRAPPAPIVAKNNEINLKKSLRKTPPADVPVEPEKDSVPEEPVQQVPVVEDIDKEQLGDPYANAEYAKEIFDYMREREEKFLLPDYMEKQSDISRDMRAILVDWMVEVQENFELNHETLYLAVKLVDHYLVEVVSMRDKLQLIGSTAVLIASKFEERCPPCVDDFLYICDDAYKREELIAMETSILRTLNFDINIPIPYRFLRRFAKCARASMETLTLARFVCEMTLQEYDYARERPSKLAASSLLLALTMKNLGGWTPTLEYYSGYCAQDLHPLVKRLNFLLTYQPCDKLKAVRTKYSHRVFFEVAKTTPMDMMKLEEKLKS</sequence>
<protein>
    <recommendedName>
        <fullName>G2/mitotic-specific cyclin-B3</fullName>
    </recommendedName>
</protein>
<comment type="function">
    <text>Cyclins are positive regulatory subunits of the cyclin-dependent kinases (CDKs), and thereby play an essential role in the control of the cell cycle, notably via their destruction during cell division. Could be involved at the G2/M (mitosis or meiosis) transition. G2/M cyclins accumulate steadily during G2 and are abruptly destroyed at mitosis.</text>
</comment>
<comment type="subunit">
    <text>Interacts with the CDK1 and CDK2 protein kinases.</text>
</comment>
<comment type="subcellular location">
    <subcellularLocation>
        <location>Nucleus</location>
    </subcellularLocation>
</comment>
<comment type="domain">
    <text evidence="1">The N-terminal destruction box (D-box) probably acts as a recognition signal for degradation via the ubiquitin-proteasome pathway.</text>
</comment>
<comment type="PTM">
    <text evidence="1">Ubiquitinated, leading to its degradation.</text>
</comment>
<comment type="similarity">
    <text evidence="3">Belongs to the cyclin family. Cyclin AB subfamily.</text>
</comment>
<proteinExistence type="evidence at transcript level"/>